<proteinExistence type="inferred from homology"/>
<feature type="chain" id="PRO_0000183031" description="Bifunctional protein PyrR">
    <location>
        <begin position="1"/>
        <end position="178"/>
    </location>
</feature>
<feature type="short sequence motif" description="PRPP-binding" evidence="2">
    <location>
        <begin position="99"/>
        <end position="111"/>
    </location>
</feature>
<feature type="binding site" evidence="1">
    <location>
        <begin position="41"/>
        <end position="42"/>
    </location>
    <ligand>
        <name>substrate</name>
    </ligand>
</feature>
<feature type="binding site" evidence="1">
    <location>
        <begin position="103"/>
        <end position="111"/>
    </location>
    <ligand>
        <name>substrate</name>
    </ligand>
</feature>
<feature type="binding site" evidence="1">
    <location>
        <position position="136"/>
    </location>
    <ligand>
        <name>substrate</name>
    </ligand>
</feature>
<organism>
    <name type="scientific">Clostridium acetobutylicum (strain ATCC 824 / DSM 792 / JCM 1419 / IAM 19013 / LMG 5710 / NBRC 13948 / NRRL B-527 / VKM B-1787 / 2291 / W)</name>
    <dbReference type="NCBI Taxonomy" id="272562"/>
    <lineage>
        <taxon>Bacteria</taxon>
        <taxon>Bacillati</taxon>
        <taxon>Bacillota</taxon>
        <taxon>Clostridia</taxon>
        <taxon>Eubacteriales</taxon>
        <taxon>Clostridiaceae</taxon>
        <taxon>Clostridium</taxon>
    </lineage>
</organism>
<protein>
    <recommendedName>
        <fullName evidence="2">Bifunctional protein PyrR</fullName>
    </recommendedName>
    <domain>
        <recommendedName>
            <fullName evidence="2">Pyrimidine operon regulatory protein</fullName>
        </recommendedName>
    </domain>
    <domain>
        <recommendedName>
            <fullName evidence="2">Uracil phosphoribosyltransferase</fullName>
            <shortName evidence="2">UPRTase</shortName>
            <ecNumber evidence="2">2.4.2.9</ecNumber>
        </recommendedName>
    </domain>
</protein>
<name>PYRR_CLOAB</name>
<dbReference type="EC" id="2.4.2.9" evidence="2"/>
<dbReference type="EMBL" id="AE001437">
    <property type="protein sequence ID" value="AAK80071.1"/>
    <property type="molecule type" value="Genomic_DNA"/>
</dbReference>
<dbReference type="PIR" id="D97160">
    <property type="entry name" value="D97160"/>
</dbReference>
<dbReference type="RefSeq" id="NP_348731.1">
    <property type="nucleotide sequence ID" value="NC_003030.1"/>
</dbReference>
<dbReference type="RefSeq" id="WP_010965412.1">
    <property type="nucleotide sequence ID" value="NC_003030.1"/>
</dbReference>
<dbReference type="SMR" id="Q97HA0"/>
<dbReference type="STRING" id="272562.CA_C2113"/>
<dbReference type="GeneID" id="44998594"/>
<dbReference type="KEGG" id="cac:CA_C2113"/>
<dbReference type="PATRIC" id="fig|272562.8.peg.2315"/>
<dbReference type="eggNOG" id="COG2065">
    <property type="taxonomic scope" value="Bacteria"/>
</dbReference>
<dbReference type="HOGENOM" id="CLU_094234_2_1_9"/>
<dbReference type="OrthoDB" id="9802227at2"/>
<dbReference type="Proteomes" id="UP000000814">
    <property type="component" value="Chromosome"/>
</dbReference>
<dbReference type="GO" id="GO:0003723">
    <property type="term" value="F:RNA binding"/>
    <property type="evidence" value="ECO:0007669"/>
    <property type="project" value="UniProtKB-UniRule"/>
</dbReference>
<dbReference type="GO" id="GO:0004845">
    <property type="term" value="F:uracil phosphoribosyltransferase activity"/>
    <property type="evidence" value="ECO:0007669"/>
    <property type="project" value="UniProtKB-UniRule"/>
</dbReference>
<dbReference type="GO" id="GO:0006353">
    <property type="term" value="P:DNA-templated transcription termination"/>
    <property type="evidence" value="ECO:0007669"/>
    <property type="project" value="UniProtKB-UniRule"/>
</dbReference>
<dbReference type="CDD" id="cd06223">
    <property type="entry name" value="PRTases_typeI"/>
    <property type="match status" value="1"/>
</dbReference>
<dbReference type="FunFam" id="3.40.50.2020:FF:000020">
    <property type="entry name" value="Bifunctional protein PyrR"/>
    <property type="match status" value="1"/>
</dbReference>
<dbReference type="Gene3D" id="3.40.50.2020">
    <property type="match status" value="1"/>
</dbReference>
<dbReference type="HAMAP" id="MF_01219">
    <property type="entry name" value="PyrR"/>
    <property type="match status" value="1"/>
</dbReference>
<dbReference type="InterPro" id="IPR000836">
    <property type="entry name" value="PRibTrfase_dom"/>
</dbReference>
<dbReference type="InterPro" id="IPR029057">
    <property type="entry name" value="PRTase-like"/>
</dbReference>
<dbReference type="InterPro" id="IPR023050">
    <property type="entry name" value="PyrR"/>
</dbReference>
<dbReference type="InterPro" id="IPR050137">
    <property type="entry name" value="PyrR_bifunctional"/>
</dbReference>
<dbReference type="NCBIfam" id="NF003548">
    <property type="entry name" value="PRK05205.1-4"/>
    <property type="match status" value="1"/>
</dbReference>
<dbReference type="NCBIfam" id="NF003549">
    <property type="entry name" value="PRK05205.1-5"/>
    <property type="match status" value="1"/>
</dbReference>
<dbReference type="PANTHER" id="PTHR11608">
    <property type="entry name" value="BIFUNCTIONAL PROTEIN PYRR"/>
    <property type="match status" value="1"/>
</dbReference>
<dbReference type="PANTHER" id="PTHR11608:SF0">
    <property type="entry name" value="BIFUNCTIONAL PROTEIN PYRR"/>
    <property type="match status" value="1"/>
</dbReference>
<dbReference type="Pfam" id="PF00156">
    <property type="entry name" value="Pribosyltran"/>
    <property type="match status" value="1"/>
</dbReference>
<dbReference type="SUPFAM" id="SSF53271">
    <property type="entry name" value="PRTase-like"/>
    <property type="match status" value="1"/>
</dbReference>
<accession>Q97HA0</accession>
<keyword id="KW-0328">Glycosyltransferase</keyword>
<keyword id="KW-1185">Reference proteome</keyword>
<keyword id="KW-0694">RNA-binding</keyword>
<keyword id="KW-0804">Transcription</keyword>
<keyword id="KW-0805">Transcription regulation</keyword>
<keyword id="KW-0806">Transcription termination</keyword>
<keyword id="KW-0808">Transferase</keyword>
<evidence type="ECO:0000250" key="1"/>
<evidence type="ECO:0000255" key="2">
    <source>
        <dbReference type="HAMAP-Rule" id="MF_01219"/>
    </source>
</evidence>
<reference key="1">
    <citation type="journal article" date="2001" name="J. Bacteriol.">
        <title>Genome sequence and comparative analysis of the solvent-producing bacterium Clostridium acetobutylicum.</title>
        <authorList>
            <person name="Noelling J."/>
            <person name="Breton G."/>
            <person name="Omelchenko M.V."/>
            <person name="Makarova K.S."/>
            <person name="Zeng Q."/>
            <person name="Gibson R."/>
            <person name="Lee H.M."/>
            <person name="Dubois J."/>
            <person name="Qiu D."/>
            <person name="Hitti J."/>
            <person name="Wolf Y.I."/>
            <person name="Tatusov R.L."/>
            <person name="Sabathe F."/>
            <person name="Doucette-Stamm L.A."/>
            <person name="Soucaille P."/>
            <person name="Daly M.J."/>
            <person name="Bennett G.N."/>
            <person name="Koonin E.V."/>
            <person name="Smith D.R."/>
        </authorList>
    </citation>
    <scope>NUCLEOTIDE SEQUENCE [LARGE SCALE GENOMIC DNA]</scope>
    <source>
        <strain>ATCC 824 / DSM 792 / JCM 1419 / IAM 19013 / LMG 5710 / NBRC 13948 / NRRL B-527 / VKM B-1787 / 2291 / W</strain>
    </source>
</reference>
<sequence>MNLKAKILDDKAMQRTLTRIAHEIIEKNKGIDDIVLVGIKRRGVPIADRIADIIEEIEGSKVKLGKVDITLYRDDLSTVSSQPIVKDEEVYEDVKDKVVILVDDVLYTGRTCRAAIEAIMHRGRPKMIQLAVLIDRGHRELPIRADYVGKNVPTSKSELISVNVKGIDEEDSVNIYEL</sequence>
<comment type="function">
    <text evidence="2">Regulates transcriptional attenuation of the pyrimidine nucleotide (pyr) operon by binding in a uridine-dependent manner to specific sites on pyr mRNA. This disrupts an antiterminator hairpin in the RNA and favors formation of a downstream transcription terminator, leading to a reduced expression of downstream genes.</text>
</comment>
<comment type="function">
    <text evidence="2">Also displays a weak uracil phosphoribosyltransferase activity which is not physiologically significant.</text>
</comment>
<comment type="catalytic activity">
    <reaction evidence="2">
        <text>UMP + diphosphate = 5-phospho-alpha-D-ribose 1-diphosphate + uracil</text>
        <dbReference type="Rhea" id="RHEA:13017"/>
        <dbReference type="ChEBI" id="CHEBI:17568"/>
        <dbReference type="ChEBI" id="CHEBI:33019"/>
        <dbReference type="ChEBI" id="CHEBI:57865"/>
        <dbReference type="ChEBI" id="CHEBI:58017"/>
        <dbReference type="EC" id="2.4.2.9"/>
    </reaction>
</comment>
<comment type="subunit">
    <text evidence="2">Homodimer and homohexamer; in equilibrium.</text>
</comment>
<comment type="similarity">
    <text evidence="2">Belongs to the purine/pyrimidine phosphoribosyltransferase family. PyrR subfamily.</text>
</comment>
<gene>
    <name evidence="2" type="primary">pyrR</name>
    <name type="ordered locus">CA_C2113</name>
</gene>